<dbReference type="EMBL" id="BX571857">
    <property type="protein sequence ID" value="CAG42508.1"/>
    <property type="molecule type" value="Genomic_DNA"/>
</dbReference>
<dbReference type="RefSeq" id="WP_000006551.1">
    <property type="nucleotide sequence ID" value="NC_002953.3"/>
</dbReference>
<dbReference type="SMR" id="Q6GB63"/>
<dbReference type="KEGG" id="sas:SAS0732"/>
<dbReference type="HOGENOM" id="CLU_053282_0_0_9"/>
<dbReference type="GO" id="GO:0003677">
    <property type="term" value="F:DNA binding"/>
    <property type="evidence" value="ECO:0007669"/>
    <property type="project" value="UniProtKB-UniRule"/>
</dbReference>
<dbReference type="GO" id="GO:0051301">
    <property type="term" value="P:cell division"/>
    <property type="evidence" value="ECO:0007669"/>
    <property type="project" value="UniProtKB-UniRule"/>
</dbReference>
<dbReference type="GO" id="GO:0043937">
    <property type="term" value="P:regulation of sporulation"/>
    <property type="evidence" value="ECO:0007669"/>
    <property type="project" value="InterPro"/>
</dbReference>
<dbReference type="FunFam" id="3.10.28.10:FF:000002">
    <property type="entry name" value="Probable cell division protein WhiA"/>
    <property type="match status" value="1"/>
</dbReference>
<dbReference type="Gene3D" id="3.10.28.10">
    <property type="entry name" value="Homing endonucleases"/>
    <property type="match status" value="1"/>
</dbReference>
<dbReference type="HAMAP" id="MF_01420">
    <property type="entry name" value="HTH_type_WhiA"/>
    <property type="match status" value="1"/>
</dbReference>
<dbReference type="InterPro" id="IPR027434">
    <property type="entry name" value="Homing_endonucl"/>
</dbReference>
<dbReference type="InterPro" id="IPR018478">
    <property type="entry name" value="Sporu_reg_WhiA_N_dom"/>
</dbReference>
<dbReference type="InterPro" id="IPR003802">
    <property type="entry name" value="Sporulation_regulator_WhiA"/>
</dbReference>
<dbReference type="InterPro" id="IPR023054">
    <property type="entry name" value="Sporulation_regulator_WhiA_C"/>
</dbReference>
<dbReference type="InterPro" id="IPR039518">
    <property type="entry name" value="WhiA_LAGLIDADG_dom"/>
</dbReference>
<dbReference type="NCBIfam" id="TIGR00647">
    <property type="entry name" value="DNA_bind_WhiA"/>
    <property type="match status" value="1"/>
</dbReference>
<dbReference type="PANTHER" id="PTHR37307">
    <property type="entry name" value="CELL DIVISION PROTEIN WHIA-RELATED"/>
    <property type="match status" value="1"/>
</dbReference>
<dbReference type="PANTHER" id="PTHR37307:SF1">
    <property type="entry name" value="CELL DIVISION PROTEIN WHIA-RELATED"/>
    <property type="match status" value="1"/>
</dbReference>
<dbReference type="Pfam" id="PF02650">
    <property type="entry name" value="HTH_WhiA"/>
    <property type="match status" value="1"/>
</dbReference>
<dbReference type="Pfam" id="PF14527">
    <property type="entry name" value="LAGLIDADG_WhiA"/>
    <property type="match status" value="1"/>
</dbReference>
<dbReference type="Pfam" id="PF10298">
    <property type="entry name" value="WhiA_N"/>
    <property type="match status" value="1"/>
</dbReference>
<dbReference type="SUPFAM" id="SSF55608">
    <property type="entry name" value="Homing endonucleases"/>
    <property type="match status" value="1"/>
</dbReference>
<organism>
    <name type="scientific">Staphylococcus aureus (strain MSSA476)</name>
    <dbReference type="NCBI Taxonomy" id="282459"/>
    <lineage>
        <taxon>Bacteria</taxon>
        <taxon>Bacillati</taxon>
        <taxon>Bacillota</taxon>
        <taxon>Bacilli</taxon>
        <taxon>Bacillales</taxon>
        <taxon>Staphylococcaceae</taxon>
        <taxon>Staphylococcus</taxon>
    </lineage>
</organism>
<comment type="function">
    <text evidence="1">Involved in cell division and chromosome segregation.</text>
</comment>
<comment type="similarity">
    <text evidence="1">Belongs to the WhiA family.</text>
</comment>
<protein>
    <recommendedName>
        <fullName evidence="1">Probable cell division protein WhiA</fullName>
    </recommendedName>
</protein>
<reference key="1">
    <citation type="journal article" date="2004" name="Proc. Natl. Acad. Sci. U.S.A.">
        <title>Complete genomes of two clinical Staphylococcus aureus strains: evidence for the rapid evolution of virulence and drug resistance.</title>
        <authorList>
            <person name="Holden M.T.G."/>
            <person name="Feil E.J."/>
            <person name="Lindsay J.A."/>
            <person name="Peacock S.J."/>
            <person name="Day N.P.J."/>
            <person name="Enright M.C."/>
            <person name="Foster T.J."/>
            <person name="Moore C.E."/>
            <person name="Hurst L."/>
            <person name="Atkin R."/>
            <person name="Barron A."/>
            <person name="Bason N."/>
            <person name="Bentley S.D."/>
            <person name="Chillingworth C."/>
            <person name="Chillingworth T."/>
            <person name="Churcher C."/>
            <person name="Clark L."/>
            <person name="Corton C."/>
            <person name="Cronin A."/>
            <person name="Doggett J."/>
            <person name="Dowd L."/>
            <person name="Feltwell T."/>
            <person name="Hance Z."/>
            <person name="Harris B."/>
            <person name="Hauser H."/>
            <person name="Holroyd S."/>
            <person name="Jagels K."/>
            <person name="James K.D."/>
            <person name="Lennard N."/>
            <person name="Line A."/>
            <person name="Mayes R."/>
            <person name="Moule S."/>
            <person name="Mungall K."/>
            <person name="Ormond D."/>
            <person name="Quail M.A."/>
            <person name="Rabbinowitsch E."/>
            <person name="Rutherford K.M."/>
            <person name="Sanders M."/>
            <person name="Sharp S."/>
            <person name="Simmonds M."/>
            <person name="Stevens K."/>
            <person name="Whitehead S."/>
            <person name="Barrell B.G."/>
            <person name="Spratt B.G."/>
            <person name="Parkhill J."/>
        </authorList>
    </citation>
    <scope>NUCLEOTIDE SEQUENCE [LARGE SCALE GENOMIC DNA]</scope>
    <source>
        <strain>MSSA476</strain>
    </source>
</reference>
<name>WHIA_STAAS</name>
<feature type="chain" id="PRO_0000376556" description="Probable cell division protein WhiA">
    <location>
        <begin position="1"/>
        <end position="314"/>
    </location>
</feature>
<feature type="DNA-binding region" description="H-T-H motif" evidence="1">
    <location>
        <begin position="274"/>
        <end position="308"/>
    </location>
</feature>
<keyword id="KW-0131">Cell cycle</keyword>
<keyword id="KW-0132">Cell division</keyword>
<keyword id="KW-0238">DNA-binding</keyword>
<sequence length="314" mass="35868">MSFASEMKNELTRIDVDEMNAKAELSALIRMNGALSLSNQQFVINVQTENATTARRIYSLIKRVFNVEVEILVRKKMKLKKNNIYICRTKMKAKEILDELGILKDGIFTHEIDHSMIQDDEMRRSYLRGAFLAGGSVNNPETSSYHLEIFSQNESHAEGLTKLMNSYELNAKHLERKKGSITYLKEAEKISDFLSLIGGYQALLKFEDVRIVRDMRNSVNRLVNCETANLNKTVSAAMKQVESIKLIDKEIGIENLPDRLREIARIRVEHQEISLKELGEMVSTGPISKSGVNHRLRKLNDLADKIRNGEQIEL</sequence>
<evidence type="ECO:0000255" key="1">
    <source>
        <dbReference type="HAMAP-Rule" id="MF_01420"/>
    </source>
</evidence>
<accession>Q6GB63</accession>
<gene>
    <name evidence="1" type="primary">whiA</name>
    <name type="ordered locus">SAS0732</name>
</gene>
<proteinExistence type="inferred from homology"/>